<feature type="chain" id="PRO_0000371541" description="Mannitol 2-dehydrogenase">
    <location>
        <begin position="1"/>
        <end position="488"/>
    </location>
</feature>
<feature type="binding site" evidence="1">
    <location>
        <begin position="37"/>
        <end position="48"/>
    </location>
    <ligand>
        <name>NAD(+)</name>
        <dbReference type="ChEBI" id="CHEBI:57540"/>
    </ligand>
</feature>
<comment type="function">
    <text evidence="1">Catalyzes the NAD(H)-dependent interconversion of D-fructose and D-mannitol in the mannitol metabolic pathway.</text>
</comment>
<comment type="catalytic activity">
    <reaction>
        <text>D-mannitol + NAD(+) = D-fructose + NADH + H(+)</text>
        <dbReference type="Rhea" id="RHEA:12084"/>
        <dbReference type="ChEBI" id="CHEBI:15378"/>
        <dbReference type="ChEBI" id="CHEBI:16899"/>
        <dbReference type="ChEBI" id="CHEBI:37721"/>
        <dbReference type="ChEBI" id="CHEBI:57540"/>
        <dbReference type="ChEBI" id="CHEBI:57945"/>
        <dbReference type="EC" id="1.1.1.67"/>
    </reaction>
</comment>
<comment type="subunit">
    <text evidence="1">Monomer.</text>
</comment>
<comment type="similarity">
    <text evidence="2">Belongs to the mannitol dehydrogenase family.</text>
</comment>
<gene>
    <name type="ORF">An03g02430</name>
</gene>
<protein>
    <recommendedName>
        <fullName>Mannitol 2-dehydrogenase</fullName>
        <shortName>M2DH</shortName>
        <shortName>MDH</shortName>
        <ecNumber>1.1.1.67</ecNumber>
    </recommendedName>
</protein>
<reference key="1">
    <citation type="journal article" date="2007" name="Nat. Biotechnol.">
        <title>Genome sequencing and analysis of the versatile cell factory Aspergillus niger CBS 513.88.</title>
        <authorList>
            <person name="Pel H.J."/>
            <person name="de Winde J.H."/>
            <person name="Archer D.B."/>
            <person name="Dyer P.S."/>
            <person name="Hofmann G."/>
            <person name="Schaap P.J."/>
            <person name="Turner G."/>
            <person name="de Vries R.P."/>
            <person name="Albang R."/>
            <person name="Albermann K."/>
            <person name="Andersen M.R."/>
            <person name="Bendtsen J.D."/>
            <person name="Benen J.A.E."/>
            <person name="van den Berg M."/>
            <person name="Breestraat S."/>
            <person name="Caddick M.X."/>
            <person name="Contreras R."/>
            <person name="Cornell M."/>
            <person name="Coutinho P.M."/>
            <person name="Danchin E.G.J."/>
            <person name="Debets A.J.M."/>
            <person name="Dekker P."/>
            <person name="van Dijck P.W.M."/>
            <person name="van Dijk A."/>
            <person name="Dijkhuizen L."/>
            <person name="Driessen A.J.M."/>
            <person name="d'Enfert C."/>
            <person name="Geysens S."/>
            <person name="Goosen C."/>
            <person name="Groot G.S.P."/>
            <person name="de Groot P.W.J."/>
            <person name="Guillemette T."/>
            <person name="Henrissat B."/>
            <person name="Herweijer M."/>
            <person name="van den Hombergh J.P.T.W."/>
            <person name="van den Hondel C.A.M.J.J."/>
            <person name="van der Heijden R.T.J.M."/>
            <person name="van der Kaaij R.M."/>
            <person name="Klis F.M."/>
            <person name="Kools H.J."/>
            <person name="Kubicek C.P."/>
            <person name="van Kuyk P.A."/>
            <person name="Lauber J."/>
            <person name="Lu X."/>
            <person name="van der Maarel M.J.E.C."/>
            <person name="Meulenberg R."/>
            <person name="Menke H."/>
            <person name="Mortimer M.A."/>
            <person name="Nielsen J."/>
            <person name="Oliver S.G."/>
            <person name="Olsthoorn M."/>
            <person name="Pal K."/>
            <person name="van Peij N.N.M.E."/>
            <person name="Ram A.F.J."/>
            <person name="Rinas U."/>
            <person name="Roubos J.A."/>
            <person name="Sagt C.M.J."/>
            <person name="Schmoll M."/>
            <person name="Sun J."/>
            <person name="Ussery D."/>
            <person name="Varga J."/>
            <person name="Vervecken W."/>
            <person name="van de Vondervoort P.J.J."/>
            <person name="Wedler H."/>
            <person name="Woesten H.A.B."/>
            <person name="Zeng A.-P."/>
            <person name="van Ooyen A.J.J."/>
            <person name="Visser J."/>
            <person name="Stam H."/>
        </authorList>
    </citation>
    <scope>NUCLEOTIDE SEQUENCE [LARGE SCALE GENOMIC DNA]</scope>
    <source>
        <strain>ATCC MYA-4892 / CBS 513.88 / FGSC A1513</strain>
    </source>
</reference>
<name>M2DH_ASPNC</name>
<sequence length="488" mass="54803">MGPLKLNTANLSQIVAAGAGRVKVPTYRRGPALKEGIVHVGVGGFHRAHLAVYVDQLMQNHGVTDYAICGVGLQPFDSAMRDALSSQDNLYTVIERSAKGSFANVIGSINSYLFAPDDREAVIAKMAHPDTRIVSLTITESGYYYNENTHELQSEHPDIQFDLDPANEKTPRTTFGFLYAALARRHQQEEWFHHPSHARVFRPSPHPEVAQWITDKGAFPNAMVDRITPQTSPADKESLANTMGIEDSWPVVTEPFMQWVIEDQFSDGRPPFEKVGVQVVKDVHAVEEFEKHKLRLLNGSHSAIGYPGQMAGFNYVHEVLENPDFNKFVWQMMQEEVKPSLPEIPGVDIDQYCKTLMERFSNPTIMDQLPRICLNASGKIPQFIMPSIAEAIWVKGPLRRLCFVAAAWFRYINGVDDQGNTFTVDDPMREELQAKARAGGTKPSELLSITSLFGDDLRNDKRFMQEITNAMEDIARDGILKTLPKYID</sequence>
<evidence type="ECO:0000250" key="1"/>
<evidence type="ECO:0000305" key="2"/>
<dbReference type="EC" id="1.1.1.67"/>
<dbReference type="EMBL" id="AM270048">
    <property type="protein sequence ID" value="CAK38211.1"/>
    <property type="molecule type" value="Genomic_DNA"/>
</dbReference>
<dbReference type="SMR" id="A2QGA1"/>
<dbReference type="EnsemblFungi" id="CAK38211">
    <property type="protein sequence ID" value="CAK38211"/>
    <property type="gene ID" value="An03g02430"/>
</dbReference>
<dbReference type="VEuPathDB" id="FungiDB:An03g02430"/>
<dbReference type="HOGENOM" id="CLU_027324_0_1_1"/>
<dbReference type="Proteomes" id="UP000006706">
    <property type="component" value="Chromosome 6R"/>
</dbReference>
<dbReference type="GO" id="GO:0050086">
    <property type="term" value="F:mannitol 2-dehydrogenase activity"/>
    <property type="evidence" value="ECO:0007669"/>
    <property type="project" value="UniProtKB-EC"/>
</dbReference>
<dbReference type="GO" id="GO:0046029">
    <property type="term" value="F:mannitol dehydrogenase activity"/>
    <property type="evidence" value="ECO:0007669"/>
    <property type="project" value="TreeGrafter"/>
</dbReference>
<dbReference type="FunFam" id="1.10.1040.10:FF:000028">
    <property type="entry name" value="Mannitol 2-dehydrogenase"/>
    <property type="match status" value="1"/>
</dbReference>
<dbReference type="Gene3D" id="1.10.1040.10">
    <property type="entry name" value="N-(1-d-carboxylethyl)-l-norvaline Dehydrogenase, domain 2"/>
    <property type="match status" value="1"/>
</dbReference>
<dbReference type="Gene3D" id="3.40.50.720">
    <property type="entry name" value="NAD(P)-binding Rossmann-like Domain"/>
    <property type="match status" value="2"/>
</dbReference>
<dbReference type="InterPro" id="IPR008927">
    <property type="entry name" value="6-PGluconate_DH-like_C_sf"/>
</dbReference>
<dbReference type="InterPro" id="IPR013328">
    <property type="entry name" value="6PGD_dom2"/>
</dbReference>
<dbReference type="InterPro" id="IPR000669">
    <property type="entry name" value="Mannitol_DH"/>
</dbReference>
<dbReference type="InterPro" id="IPR050988">
    <property type="entry name" value="Mannitol_DH/Oxidoreductase"/>
</dbReference>
<dbReference type="InterPro" id="IPR013118">
    <property type="entry name" value="Mannitol_DH_C"/>
</dbReference>
<dbReference type="InterPro" id="IPR013131">
    <property type="entry name" value="Mannitol_DH_N"/>
</dbReference>
<dbReference type="InterPro" id="IPR036291">
    <property type="entry name" value="NAD(P)-bd_dom_sf"/>
</dbReference>
<dbReference type="PANTHER" id="PTHR43362:SF1">
    <property type="entry name" value="MANNITOL DEHYDROGENASE 2-RELATED"/>
    <property type="match status" value="1"/>
</dbReference>
<dbReference type="PANTHER" id="PTHR43362">
    <property type="entry name" value="MANNITOL DEHYDROGENASE DSF1-RELATED"/>
    <property type="match status" value="1"/>
</dbReference>
<dbReference type="Pfam" id="PF01232">
    <property type="entry name" value="Mannitol_dh"/>
    <property type="match status" value="1"/>
</dbReference>
<dbReference type="Pfam" id="PF08125">
    <property type="entry name" value="Mannitol_dh_C"/>
    <property type="match status" value="1"/>
</dbReference>
<dbReference type="PRINTS" id="PR00084">
    <property type="entry name" value="MTLDHDRGNASE"/>
</dbReference>
<dbReference type="SUPFAM" id="SSF48179">
    <property type="entry name" value="6-phosphogluconate dehydrogenase C-terminal domain-like"/>
    <property type="match status" value="1"/>
</dbReference>
<dbReference type="SUPFAM" id="SSF51735">
    <property type="entry name" value="NAD(P)-binding Rossmann-fold domains"/>
    <property type="match status" value="1"/>
</dbReference>
<proteinExistence type="inferred from homology"/>
<keyword id="KW-0520">NAD</keyword>
<keyword id="KW-0560">Oxidoreductase</keyword>
<keyword id="KW-1185">Reference proteome</keyword>
<organism>
    <name type="scientific">Aspergillus niger (strain ATCC MYA-4892 / CBS 513.88 / FGSC A1513)</name>
    <dbReference type="NCBI Taxonomy" id="425011"/>
    <lineage>
        <taxon>Eukaryota</taxon>
        <taxon>Fungi</taxon>
        <taxon>Dikarya</taxon>
        <taxon>Ascomycota</taxon>
        <taxon>Pezizomycotina</taxon>
        <taxon>Eurotiomycetes</taxon>
        <taxon>Eurotiomycetidae</taxon>
        <taxon>Eurotiales</taxon>
        <taxon>Aspergillaceae</taxon>
        <taxon>Aspergillus</taxon>
        <taxon>Aspergillus subgen. Circumdati</taxon>
    </lineage>
</organism>
<accession>A2QGA1</accession>